<name>GP38_BPSP1</name>
<organismHost>
    <name type="scientific">Bacillus subtilis</name>
    <dbReference type="NCBI Taxonomy" id="1423"/>
</organismHost>
<accession>O48394</accession>
<protein>
    <recommendedName>
        <fullName>Putative gene 38 protein</fullName>
    </recommendedName>
</protein>
<dbReference type="EMBL" id="AF031901">
    <property type="protein sequence ID" value="AAC29007.1"/>
    <property type="molecule type" value="Genomic_DNA"/>
</dbReference>
<dbReference type="RefSeq" id="YP_002300282.1">
    <property type="nucleotide sequence ID" value="NC_011421.1"/>
</dbReference>
<dbReference type="GeneID" id="7008995"/>
<dbReference type="KEGG" id="vg:7008995"/>
<gene>
    <name type="primary">38</name>
</gene>
<reference key="1">
    <citation type="journal article" date="1998" name="Virology">
        <title>Genes and regulatory sites of the 'host-takeover module' in the terminal redundancy of Bacillus subtilis bacteriophage SPO1.</title>
        <authorList>
            <person name="Stewart C.R."/>
            <person name="Gaslightwala I."/>
            <person name="Hinata K."/>
            <person name="Krolikowski K.A."/>
            <person name="Needleman D.S."/>
            <person name="Peng A.S.-Y."/>
            <person name="Peterman M.A."/>
            <person name="Tobias A."/>
            <person name="Wei P."/>
        </authorList>
    </citation>
    <scope>NUCLEOTIDE SEQUENCE [GENOMIC DNA]</scope>
</reference>
<sequence length="190" mass="21715">MSVQIKHGNKTFVVDPSGDVKEGSYVLYLYEYRLGEVDVGRVSEVANDGRLYLDGPGVIVTLDQPFILLKEVVEEEEDEDDRIDAEFHNDPLLRKLENTTEKLTPEETQLAQWTTMTRVFSHDLKKGIPYAIKHKNSGNILYGLYSGLLNPVTALFRHLNEESKISIEQLKSGLIEIYEVVEDEEESIWN</sequence>
<organism>
    <name type="scientific">Bacillus phage SP01</name>
    <name type="common">Bacteriophage SP01</name>
    <dbReference type="NCBI Taxonomy" id="2884427"/>
    <lineage>
        <taxon>Viruses</taxon>
        <taxon>Duplodnaviria</taxon>
        <taxon>Heunggongvirae</taxon>
        <taxon>Uroviricota</taxon>
        <taxon>Caudoviricetes</taxon>
        <taxon>Herelleviridae</taxon>
        <taxon>Spounavirinae</taxon>
        <taxon>Okubovirus</taxon>
        <taxon>Okubovirus SPO1</taxon>
    </lineage>
</organism>
<proteinExistence type="predicted"/>
<feature type="chain" id="PRO_0000106144" description="Putative gene 38 protein">
    <location>
        <begin position="1"/>
        <end position="190"/>
    </location>
</feature>